<organismHost>
    <name type="scientific">Homo sapiens</name>
    <name type="common">Human</name>
    <dbReference type="NCBI Taxonomy" id="9606"/>
</organismHost>
<accession>B1NKS7</accession>
<sequence>MKVLALRHSVAQVYADTQVYTHDNSKDEYENAFLISNLTTHNILYLNYSVKTLQILNKSGIAAIEIQKMDELFTLIRCNFTYDYIDDVVYLHDYSYYTNNEIRTDQHWVTKTNIEDYLLPGWKLTYVGYNGSDTRGHYNFSFRCQNAATDDDAIIEYIYSDELDFQSFILKKIKERMTTSLPIARLSNRVFRDKLFKTLSVNHDKVVNVGPRNESMFTFLDYPSIKQFSNGPYLVKDTIKLKQERWLGKRLSQFDIGQYKNMLNVLTTLYQYYDMYHEKPIVYMIGSAPSYWIYDVKQYSDLKFETWDPLDTPYSNLHHKELFYINDVQKLKDNSILYIDIRTDRGNMDWKEWRKVVERQTADNLYIAYKYLSTGRAKICCVKMTAMDLELPISAKLLHHPTTEIRSEFYLMMDIWDSKNIKRFIPKGVLYSYINNIITENVFIQQPFKLKTLKNEYVIALYALSNDLNNREDVIKLINNQKKALITVRINNTFKDEPKVGFKNIYDWTFLPTDFETSESIITSYDGCLGIFGLSISLASKPTGNNHLFILSGTDKYFKLDQFANHMSISRRSHQIRFSESATSYSGYIFRDLSNNNFNLIGTNVENSVSGHVYNALIYYRYNYSFDLKRWIYLHSTGKASIEGGRYYEHAPIELIYACRSAREFAKLQDDLTVLRYSNEIENYINKVYSITYADDPNYFIGVKFKNIPYKYNVKVPHLTFGVLNISEQMLPDAIAILKKFKNELFGMDITTSYTYMLSDEVYVANISGVLSTYFKIYNAFYKEQITFGQSRMFIPHVTLSFSNEKTVRIDTTKLYIDSIYLRKIKGDTVFDMTG</sequence>
<evidence type="ECO:0000255" key="1">
    <source>
        <dbReference type="HAMAP-Rule" id="MF_04128"/>
    </source>
</evidence>
<name>VP3_ROTHL</name>
<feature type="chain" id="PRO_0000368082" description="Protein VP3">
    <location>
        <begin position="1"/>
        <end position="835"/>
    </location>
</feature>
<feature type="region of interest" description="N7-methyltransferase activity" evidence="1">
    <location>
        <begin position="171"/>
        <end position="245"/>
    </location>
</feature>
<feature type="region of interest" description="2'-O-methyltransferase activity" evidence="1">
    <location>
        <begin position="246"/>
        <end position="428"/>
    </location>
</feature>
<feature type="region of interest" description="N7-methyltransferase activity" evidence="1">
    <location>
        <begin position="429"/>
        <end position="555"/>
    </location>
</feature>
<feature type="region of interest" description="GTase/RTPase activity" evidence="1">
    <location>
        <begin position="556"/>
        <end position="692"/>
    </location>
</feature>
<feature type="region of interest" description="2'-5'-phosphodiesterase activity" evidence="1">
    <location>
        <begin position="693"/>
        <end position="835"/>
    </location>
</feature>
<feature type="active site" description="For 2'-5'-phosphodiesterase activity" evidence="1">
    <location>
        <position position="718"/>
    </location>
</feature>
<feature type="active site" description="For 2'-5'-phosphodiesterase activity" evidence="1">
    <location>
        <position position="720"/>
    </location>
</feature>
<feature type="active site" description="For 2'-5'-phosphodiesterase activity" evidence="1">
    <location>
        <position position="797"/>
    </location>
</feature>
<feature type="active site" description="For 2'-5'-phosphodiesterase activity" evidence="1">
    <location>
        <position position="799"/>
    </location>
</feature>
<protein>
    <recommendedName>
        <fullName evidence="1">Protein VP3</fullName>
    </recommendedName>
    <domain>
        <recommendedName>
            <fullName evidence="1">2',5'-phosphodiesterase</fullName>
            <ecNumber evidence="1">3.1.4.-</ecNumber>
        </recommendedName>
    </domain>
    <domain>
        <recommendedName>
            <fullName evidence="1">mRNA guanylyltransferase</fullName>
            <ecNumber evidence="1">2.7.7.50</ecNumber>
        </recommendedName>
    </domain>
    <domain>
        <recommendedName>
            <fullName evidence="1">mRNA (guanine-N(7))-methyltransferase</fullName>
            <ecNumber evidence="1">2.1.1.56</ecNumber>
        </recommendedName>
    </domain>
</protein>
<keyword id="KW-0342">GTP-binding</keyword>
<keyword id="KW-0945">Host-virus interaction</keyword>
<keyword id="KW-0378">Hydrolase</keyword>
<keyword id="KW-1090">Inhibition of host innate immune response by virus</keyword>
<keyword id="KW-0489">Methyltransferase</keyword>
<keyword id="KW-0506">mRNA capping</keyword>
<keyword id="KW-0507">mRNA processing</keyword>
<keyword id="KW-0511">Multifunctional enzyme</keyword>
<keyword id="KW-0547">Nucleotide-binding</keyword>
<keyword id="KW-0548">Nucleotidyltransferase</keyword>
<keyword id="KW-0694">RNA-binding</keyword>
<keyword id="KW-0949">S-adenosyl-L-methionine</keyword>
<keyword id="KW-0808">Transferase</keyword>
<keyword id="KW-0899">Viral immunoevasion</keyword>
<keyword id="KW-0946">Virion</keyword>
<reference key="1">
    <citation type="journal article" date="2008" name="J. Virol.">
        <title>Full genome-based classification of rotaviruses reveals a common origin between human Wa-Like and porcine rotavirus strains and human DS-1-like and bovine rotavirus strains.</title>
        <authorList>
            <person name="Matthijnssens J."/>
            <person name="Ciarlet M."/>
            <person name="Heiman E.M."/>
            <person name="Arijs I."/>
            <person name="Delbeke T."/>
            <person name="McDonald S.M."/>
            <person name="Palombo E.A."/>
            <person name="Iturriza-Gomara M."/>
            <person name="Maes P."/>
            <person name="Patton J.T."/>
            <person name="Rahman M."/>
            <person name="Van Ranst M."/>
        </authorList>
    </citation>
    <scope>NUCLEOTIDE SEQUENCE [GENOMIC RNA]</scope>
</reference>
<comment type="function">
    <text evidence="1">Multifunctional enzyme involved in mRNA capping. Catalyzes the formation of the 5' cap structure on the viral plus-strand transcripts. Specifically binds to GTP and displays guanylyltransferase and methyltransferase activities. Has affinity for ssRNA but not for dsRNA. Capping activity is non-specific and caps RNAs that initiate with either a G or an A residue. Together with VP1 polymerase, forms a VP1-VP3 complex positioned near the channels situated at each of the five-fold vertices of the core. Following infection, the outermost layer of the virus is lost, leaving a double-layered particle (DLP) made up of the core and VP6 shell. VP1 then catalyzes the transcription of fully conservative plus-strand genomic RNAs that are capped by VP3 and extruded through the DLP's channels into the cytoplasm where they function as mRNAs for translation of viral proteins. DLPs probably have an RNA triphosphatase activity as well, whereas open cores do not.</text>
</comment>
<comment type="function">
    <text evidence="1">Counteracts the host innate immune response thanks to its phosphodiesterase that degrades the 5'-triphosphorylated, 2'-5' linked adenylate oligomers produced by the host cell IFN-inducible 2',5'-oligoadenylate synthetase (OAS). The host RNaseL is therefore not activated.</text>
</comment>
<comment type="catalytic activity">
    <reaction evidence="1">
        <text>a 5'-end diphospho-ribonucleoside in mRNA + GTP + H(+) = a 5'-end (5'-triphosphoguanosine)-ribonucleoside in mRNA + diphosphate</text>
        <dbReference type="Rhea" id="RHEA:67012"/>
        <dbReference type="Rhea" id="RHEA-COMP:17165"/>
        <dbReference type="Rhea" id="RHEA-COMP:17166"/>
        <dbReference type="ChEBI" id="CHEBI:15378"/>
        <dbReference type="ChEBI" id="CHEBI:33019"/>
        <dbReference type="ChEBI" id="CHEBI:37565"/>
        <dbReference type="ChEBI" id="CHEBI:167616"/>
        <dbReference type="ChEBI" id="CHEBI:167617"/>
        <dbReference type="EC" id="2.7.7.50"/>
    </reaction>
</comment>
<comment type="catalytic activity">
    <reaction evidence="1">
        <text>a 5'-end (5'-triphosphoguanosine)-ribonucleoside in mRNA + S-adenosyl-L-methionine = a 5'-end (N(7)-methyl 5'-triphosphoguanosine)-ribonucleoside in mRNA + S-adenosyl-L-homocysteine</text>
        <dbReference type="Rhea" id="RHEA:67008"/>
        <dbReference type="Rhea" id="RHEA-COMP:17166"/>
        <dbReference type="Rhea" id="RHEA-COMP:17167"/>
        <dbReference type="ChEBI" id="CHEBI:57856"/>
        <dbReference type="ChEBI" id="CHEBI:59789"/>
        <dbReference type="ChEBI" id="CHEBI:156461"/>
        <dbReference type="ChEBI" id="CHEBI:167617"/>
        <dbReference type="EC" id="2.1.1.56"/>
    </reaction>
</comment>
<comment type="catalytic activity">
    <reaction evidence="1">
        <text>5'-triphosphoadenylyl-(2'-&gt;5')-adenylyl-(2'-&gt;5')-adenosine + 2 H2O = 2 AMP + ATP + 2 H(+)</text>
        <dbReference type="Rhea" id="RHEA:45964"/>
        <dbReference type="ChEBI" id="CHEBI:15377"/>
        <dbReference type="ChEBI" id="CHEBI:15378"/>
        <dbReference type="ChEBI" id="CHEBI:30616"/>
        <dbReference type="ChEBI" id="CHEBI:67143"/>
        <dbReference type="ChEBI" id="CHEBI:456215"/>
    </reaction>
</comment>
<comment type="subunit">
    <text evidence="1">Interacts with VP1. Interacts with VP2.</text>
</comment>
<comment type="subcellular location">
    <subcellularLocation>
        <location evidence="1">Virion</location>
    </subcellularLocation>
    <text evidence="1">Attached inside the inner capsid as a minor component. There are about 11 to 12 copies per virion.</text>
</comment>
<comment type="domain">
    <text evidence="1">Contains a bipartite N7-methyltransferase domain, a 2'-O-methyltransferase domain and a GTase/RTPase domain. The C-terminus contains a phosphodiesterase domain that degrades the 5'-triphosphorylated, 2'-5' linked adenylate oligomers produced by the host cell in response to IFN stimulation.</text>
</comment>
<comment type="similarity">
    <text evidence="1">Belongs to the rotavirus VP3 family.</text>
</comment>
<proteinExistence type="inferred from homology"/>
<dbReference type="EC" id="3.1.4.-" evidence="1"/>
<dbReference type="EC" id="2.7.7.50" evidence="1"/>
<dbReference type="EC" id="2.1.1.56" evidence="1"/>
<dbReference type="EMBL" id="EF583035">
    <property type="protein sequence ID" value="ABU87844.1"/>
    <property type="molecule type" value="Genomic_RNA"/>
</dbReference>
<dbReference type="SMR" id="B1NKS7"/>
<dbReference type="Proteomes" id="UP000001459">
    <property type="component" value="Genome"/>
</dbReference>
<dbReference type="GO" id="GO:0019013">
    <property type="term" value="C:viral nucleocapsid"/>
    <property type="evidence" value="ECO:0007669"/>
    <property type="project" value="UniProtKB-UniRule"/>
</dbReference>
<dbReference type="GO" id="GO:0005525">
    <property type="term" value="F:GTP binding"/>
    <property type="evidence" value="ECO:0007669"/>
    <property type="project" value="UniProtKB-UniRule"/>
</dbReference>
<dbReference type="GO" id="GO:0016787">
    <property type="term" value="F:hydrolase activity"/>
    <property type="evidence" value="ECO:0007669"/>
    <property type="project" value="UniProtKB-KW"/>
</dbReference>
<dbReference type="GO" id="GO:0004482">
    <property type="term" value="F:mRNA 5'-cap (guanine-N7-)-methyltransferase activity"/>
    <property type="evidence" value="ECO:0007669"/>
    <property type="project" value="UniProtKB-UniRule"/>
</dbReference>
<dbReference type="GO" id="GO:0004484">
    <property type="term" value="F:mRNA guanylyltransferase activity"/>
    <property type="evidence" value="ECO:0007669"/>
    <property type="project" value="UniProtKB-UniRule"/>
</dbReference>
<dbReference type="GO" id="GO:0003723">
    <property type="term" value="F:RNA binding"/>
    <property type="evidence" value="ECO:0007669"/>
    <property type="project" value="UniProtKB-UniRule"/>
</dbReference>
<dbReference type="GO" id="GO:0052170">
    <property type="term" value="P:symbiont-mediated suppression of host innate immune response"/>
    <property type="evidence" value="ECO:0007669"/>
    <property type="project" value="UniProtKB-KW"/>
</dbReference>
<dbReference type="GO" id="GO:0016032">
    <property type="term" value="P:viral process"/>
    <property type="evidence" value="ECO:0007669"/>
    <property type="project" value="UniProtKB-UniRule"/>
</dbReference>
<dbReference type="CDD" id="cd20757">
    <property type="entry name" value="capping_2-OMTase_Rotavirus"/>
    <property type="match status" value="1"/>
</dbReference>
<dbReference type="HAMAP" id="MF_04124">
    <property type="entry name" value="Rota_VP3"/>
    <property type="match status" value="1"/>
</dbReference>
<dbReference type="HAMAP" id="MF_04128">
    <property type="entry name" value="Rota_VP3_A"/>
    <property type="match status" value="1"/>
</dbReference>
<dbReference type="InterPro" id="IPR011181">
    <property type="entry name" value="VP3_Rotav"/>
</dbReference>
<dbReference type="Pfam" id="PF06929">
    <property type="entry name" value="Rotavirus_VP3"/>
    <property type="match status" value="1"/>
</dbReference>
<dbReference type="PIRSF" id="PIRSF004015">
    <property type="entry name" value="LigT_rotavirus"/>
    <property type="match status" value="1"/>
</dbReference>
<dbReference type="PROSITE" id="PS51589">
    <property type="entry name" value="SAM_MT56_VP3"/>
    <property type="match status" value="1"/>
</dbReference>
<organism>
    <name type="scientific">Rotavirus A (strain RVA/Human/Philippines/L26/1987/G12P1B[4])</name>
    <name type="common">RV-A</name>
    <dbReference type="NCBI Taxonomy" id="10953"/>
    <lineage>
        <taxon>Viruses</taxon>
        <taxon>Riboviria</taxon>
        <taxon>Orthornavirae</taxon>
        <taxon>Duplornaviricota</taxon>
        <taxon>Resentoviricetes</taxon>
        <taxon>Reovirales</taxon>
        <taxon>Sedoreoviridae</taxon>
        <taxon>Rotavirus</taxon>
        <taxon>Rotavirus A</taxon>
    </lineage>
</organism>